<name>FENR2_LISMF</name>
<protein>
    <recommendedName>
        <fullName evidence="1">Ferredoxin--NADP reductase 2</fullName>
        <shortName evidence="1">FNR 2</shortName>
        <shortName evidence="1">Fd-NADP(+) reductase 2</shortName>
        <ecNumber evidence="1">1.18.1.2</ecNumber>
    </recommendedName>
</protein>
<reference key="1">
    <citation type="journal article" date="2004" name="Nucleic Acids Res.">
        <title>Whole genome comparisons of serotype 4b and 1/2a strains of the food-borne pathogen Listeria monocytogenes reveal new insights into the core genome components of this species.</title>
        <authorList>
            <person name="Nelson K.E."/>
            <person name="Fouts D.E."/>
            <person name="Mongodin E.F."/>
            <person name="Ravel J."/>
            <person name="DeBoy R.T."/>
            <person name="Kolonay J.F."/>
            <person name="Rasko D.A."/>
            <person name="Angiuoli S.V."/>
            <person name="Gill S.R."/>
            <person name="Paulsen I.T."/>
            <person name="Peterson J.D."/>
            <person name="White O."/>
            <person name="Nelson W.C."/>
            <person name="Nierman W.C."/>
            <person name="Beanan M.J."/>
            <person name="Brinkac L.M."/>
            <person name="Daugherty S.C."/>
            <person name="Dodson R.J."/>
            <person name="Durkin A.S."/>
            <person name="Madupu R."/>
            <person name="Haft D.H."/>
            <person name="Selengut J."/>
            <person name="Van Aken S.E."/>
            <person name="Khouri H.M."/>
            <person name="Fedorova N."/>
            <person name="Forberger H.A."/>
            <person name="Tran B."/>
            <person name="Kathariou S."/>
            <person name="Wonderling L.D."/>
            <person name="Uhlich G.A."/>
            <person name="Bayles D.O."/>
            <person name="Luchansky J.B."/>
            <person name="Fraser C.M."/>
        </authorList>
    </citation>
    <scope>NUCLEOTIDE SEQUENCE [LARGE SCALE GENOMIC DNA]</scope>
    <source>
        <strain>F2365</strain>
    </source>
</reference>
<sequence length="331" mass="36507">MDEKTKIYDITIIGGGPVGLFAAFYAGMRNASVKIIESLPQLGGQLSTLYPEKYIYDIPGYPAVRAQELVNNLIQQMKPFDPTIALEEAVQSVEKQVDGTFEIITKKDTHYSKAVIITAGNGAFEPRRLDLPEAEQYEGKNIHYFINDLSRFSGRRVAVCGGGDSAVDWALMLEKVASSVAIVHRRNAFRAHEHSVNNLEKSSIAIKTPFIPTEVLGNGDKLTHITLQEVKGDTRETLEIDDFIINYGFVSSLGPIKNWGLELERNSIVVNSKMETSIPGIYCAGDICTYDGKVKLIATGFGEAPTAINNAMNFIDPKTRVQPMHSTSLFE</sequence>
<keyword id="KW-0274">FAD</keyword>
<keyword id="KW-0285">Flavoprotein</keyword>
<keyword id="KW-0521">NADP</keyword>
<keyword id="KW-0560">Oxidoreductase</keyword>
<proteinExistence type="inferred from homology"/>
<comment type="catalytic activity">
    <reaction evidence="1">
        <text>2 reduced [2Fe-2S]-[ferredoxin] + NADP(+) + H(+) = 2 oxidized [2Fe-2S]-[ferredoxin] + NADPH</text>
        <dbReference type="Rhea" id="RHEA:20125"/>
        <dbReference type="Rhea" id="RHEA-COMP:10000"/>
        <dbReference type="Rhea" id="RHEA-COMP:10001"/>
        <dbReference type="ChEBI" id="CHEBI:15378"/>
        <dbReference type="ChEBI" id="CHEBI:33737"/>
        <dbReference type="ChEBI" id="CHEBI:33738"/>
        <dbReference type="ChEBI" id="CHEBI:57783"/>
        <dbReference type="ChEBI" id="CHEBI:58349"/>
        <dbReference type="EC" id="1.18.1.2"/>
    </reaction>
</comment>
<comment type="cofactor">
    <cofactor evidence="1">
        <name>FAD</name>
        <dbReference type="ChEBI" id="CHEBI:57692"/>
    </cofactor>
    <text evidence="1">Binds 1 FAD per subunit.</text>
</comment>
<comment type="subunit">
    <text evidence="1">Homodimer.</text>
</comment>
<comment type="similarity">
    <text evidence="1">Belongs to the ferredoxin--NADP reductase type 2 family.</text>
</comment>
<gene>
    <name type="ordered locus">LMOf2365_2364</name>
</gene>
<dbReference type="EC" id="1.18.1.2" evidence="1"/>
<dbReference type="EMBL" id="AE017262">
    <property type="protein sequence ID" value="AAT05130.1"/>
    <property type="molecule type" value="Genomic_DNA"/>
</dbReference>
<dbReference type="RefSeq" id="WP_010959039.1">
    <property type="nucleotide sequence ID" value="NC_002973.6"/>
</dbReference>
<dbReference type="SMR" id="Q71X35"/>
<dbReference type="KEGG" id="lmf:LMOf2365_2364"/>
<dbReference type="HOGENOM" id="CLU_031864_5_5_9"/>
<dbReference type="GO" id="GO:0004324">
    <property type="term" value="F:ferredoxin-NADP+ reductase activity"/>
    <property type="evidence" value="ECO:0007669"/>
    <property type="project" value="UniProtKB-UniRule"/>
</dbReference>
<dbReference type="GO" id="GO:0050660">
    <property type="term" value="F:flavin adenine dinucleotide binding"/>
    <property type="evidence" value="ECO:0007669"/>
    <property type="project" value="UniProtKB-UniRule"/>
</dbReference>
<dbReference type="GO" id="GO:0050661">
    <property type="term" value="F:NADP binding"/>
    <property type="evidence" value="ECO:0007669"/>
    <property type="project" value="UniProtKB-UniRule"/>
</dbReference>
<dbReference type="Gene3D" id="3.50.50.60">
    <property type="entry name" value="FAD/NAD(P)-binding domain"/>
    <property type="match status" value="2"/>
</dbReference>
<dbReference type="HAMAP" id="MF_01685">
    <property type="entry name" value="FENR2"/>
    <property type="match status" value="1"/>
</dbReference>
<dbReference type="InterPro" id="IPR036188">
    <property type="entry name" value="FAD/NAD-bd_sf"/>
</dbReference>
<dbReference type="InterPro" id="IPR023753">
    <property type="entry name" value="FAD/NAD-binding_dom"/>
</dbReference>
<dbReference type="InterPro" id="IPR022890">
    <property type="entry name" value="Fd--NADP_Rdtase_type_2"/>
</dbReference>
<dbReference type="InterPro" id="IPR050097">
    <property type="entry name" value="Ferredoxin-NADP_redctase_2"/>
</dbReference>
<dbReference type="PANTHER" id="PTHR48105">
    <property type="entry name" value="THIOREDOXIN REDUCTASE 1-RELATED-RELATED"/>
    <property type="match status" value="1"/>
</dbReference>
<dbReference type="Pfam" id="PF07992">
    <property type="entry name" value="Pyr_redox_2"/>
    <property type="match status" value="1"/>
</dbReference>
<dbReference type="PRINTS" id="PR00368">
    <property type="entry name" value="FADPNR"/>
</dbReference>
<dbReference type="PRINTS" id="PR00469">
    <property type="entry name" value="PNDRDTASEII"/>
</dbReference>
<dbReference type="SUPFAM" id="SSF51905">
    <property type="entry name" value="FAD/NAD(P)-binding domain"/>
    <property type="match status" value="1"/>
</dbReference>
<organism>
    <name type="scientific">Listeria monocytogenes serotype 4b (strain F2365)</name>
    <dbReference type="NCBI Taxonomy" id="265669"/>
    <lineage>
        <taxon>Bacteria</taxon>
        <taxon>Bacillati</taxon>
        <taxon>Bacillota</taxon>
        <taxon>Bacilli</taxon>
        <taxon>Bacillales</taxon>
        <taxon>Listeriaceae</taxon>
        <taxon>Listeria</taxon>
    </lineage>
</organism>
<feature type="chain" id="PRO_0000364874" description="Ferredoxin--NADP reductase 2">
    <location>
        <begin position="1"/>
        <end position="331"/>
    </location>
</feature>
<feature type="binding site" evidence="1">
    <location>
        <position position="37"/>
    </location>
    <ligand>
        <name>FAD</name>
        <dbReference type="ChEBI" id="CHEBI:57692"/>
    </ligand>
</feature>
<feature type="binding site" evidence="1">
    <location>
        <position position="45"/>
    </location>
    <ligand>
        <name>FAD</name>
        <dbReference type="ChEBI" id="CHEBI:57692"/>
    </ligand>
</feature>
<feature type="binding site" evidence="1">
    <location>
        <position position="50"/>
    </location>
    <ligand>
        <name>FAD</name>
        <dbReference type="ChEBI" id="CHEBI:57692"/>
    </ligand>
</feature>
<feature type="binding site" evidence="1">
    <location>
        <position position="90"/>
    </location>
    <ligand>
        <name>FAD</name>
        <dbReference type="ChEBI" id="CHEBI:57692"/>
    </ligand>
</feature>
<feature type="binding site" evidence="1">
    <location>
        <position position="124"/>
    </location>
    <ligand>
        <name>FAD</name>
        <dbReference type="ChEBI" id="CHEBI:57692"/>
    </ligand>
</feature>
<feature type="binding site" evidence="1">
    <location>
        <position position="286"/>
    </location>
    <ligand>
        <name>FAD</name>
        <dbReference type="ChEBI" id="CHEBI:57692"/>
    </ligand>
</feature>
<feature type="binding site" evidence="1">
    <location>
        <position position="327"/>
    </location>
    <ligand>
        <name>FAD</name>
        <dbReference type="ChEBI" id="CHEBI:57692"/>
    </ligand>
</feature>
<evidence type="ECO:0000255" key="1">
    <source>
        <dbReference type="HAMAP-Rule" id="MF_01685"/>
    </source>
</evidence>
<accession>Q71X35</accession>